<feature type="chain" id="PRO_1000011012" description="N-acetyl-gamma-glutamyl-phosphate reductase">
    <location>
        <begin position="1"/>
        <end position="343"/>
    </location>
</feature>
<feature type="active site" evidence="1">
    <location>
        <position position="149"/>
    </location>
</feature>
<name>ARGC_METM5</name>
<reference key="1">
    <citation type="submission" date="2007-03" db="EMBL/GenBank/DDBJ databases">
        <title>Complete sequence of chromosome of Methanococcus maripaludis C5.</title>
        <authorList>
            <consortium name="US DOE Joint Genome Institute"/>
            <person name="Copeland A."/>
            <person name="Lucas S."/>
            <person name="Lapidus A."/>
            <person name="Barry K."/>
            <person name="Glavina del Rio T."/>
            <person name="Dalin E."/>
            <person name="Tice H."/>
            <person name="Pitluck S."/>
            <person name="Chertkov O."/>
            <person name="Brettin T."/>
            <person name="Bruce D."/>
            <person name="Han C."/>
            <person name="Detter J.C."/>
            <person name="Schmutz J."/>
            <person name="Larimer F."/>
            <person name="Land M."/>
            <person name="Hauser L."/>
            <person name="Kyrpides N."/>
            <person name="Mikhailova N."/>
            <person name="Sieprawska-Lupa M."/>
            <person name="Whitman W.B."/>
            <person name="Richardson P."/>
        </authorList>
    </citation>
    <scope>NUCLEOTIDE SEQUENCE [LARGE SCALE GENOMIC DNA]</scope>
    <source>
        <strain>C5 / ATCC BAA-1333</strain>
    </source>
</reference>
<comment type="function">
    <text evidence="1">Catalyzes the NADPH-dependent reduction of N-acetyl-5-glutamyl phosphate to yield N-acetyl-L-glutamate 5-semialdehyde.</text>
</comment>
<comment type="catalytic activity">
    <reaction evidence="1">
        <text>N-acetyl-L-glutamate 5-semialdehyde + phosphate + NADP(+) = N-acetyl-L-glutamyl 5-phosphate + NADPH + H(+)</text>
        <dbReference type="Rhea" id="RHEA:21588"/>
        <dbReference type="ChEBI" id="CHEBI:15378"/>
        <dbReference type="ChEBI" id="CHEBI:29123"/>
        <dbReference type="ChEBI" id="CHEBI:43474"/>
        <dbReference type="ChEBI" id="CHEBI:57783"/>
        <dbReference type="ChEBI" id="CHEBI:57936"/>
        <dbReference type="ChEBI" id="CHEBI:58349"/>
        <dbReference type="EC" id="1.2.1.38"/>
    </reaction>
</comment>
<comment type="pathway">
    <text evidence="1">Amino-acid biosynthesis; L-arginine biosynthesis; N(2)-acetyl-L-ornithine from L-glutamate: step 3/4.</text>
</comment>
<comment type="subcellular location">
    <subcellularLocation>
        <location evidence="1">Cytoplasm</location>
    </subcellularLocation>
</comment>
<comment type="similarity">
    <text evidence="1">Belongs to the NAGSA dehydrogenase family. Type 1 subfamily.</text>
</comment>
<proteinExistence type="inferred from homology"/>
<evidence type="ECO:0000255" key="1">
    <source>
        <dbReference type="HAMAP-Rule" id="MF_00150"/>
    </source>
</evidence>
<keyword id="KW-0028">Amino-acid biosynthesis</keyword>
<keyword id="KW-0055">Arginine biosynthesis</keyword>
<keyword id="KW-0963">Cytoplasm</keyword>
<keyword id="KW-0521">NADP</keyword>
<keyword id="KW-0560">Oxidoreductase</keyword>
<gene>
    <name evidence="1" type="primary">argC</name>
    <name type="ordered locus">MmarC5_1562</name>
</gene>
<dbReference type="EC" id="1.2.1.38" evidence="1"/>
<dbReference type="EMBL" id="CP000609">
    <property type="protein sequence ID" value="ABO35859.1"/>
    <property type="molecule type" value="Genomic_DNA"/>
</dbReference>
<dbReference type="RefSeq" id="WP_011869306.1">
    <property type="nucleotide sequence ID" value="NC_009135.1"/>
</dbReference>
<dbReference type="SMR" id="A4G075"/>
<dbReference type="STRING" id="402880.MmarC5_1562"/>
<dbReference type="GeneID" id="4929151"/>
<dbReference type="KEGG" id="mmq:MmarC5_1562"/>
<dbReference type="eggNOG" id="arCOG00495">
    <property type="taxonomic scope" value="Archaea"/>
</dbReference>
<dbReference type="HOGENOM" id="CLU_006384_0_1_2"/>
<dbReference type="OrthoDB" id="372053at2157"/>
<dbReference type="UniPathway" id="UPA00068">
    <property type="reaction ID" value="UER00108"/>
</dbReference>
<dbReference type="Proteomes" id="UP000000253">
    <property type="component" value="Chromosome"/>
</dbReference>
<dbReference type="GO" id="GO:0005737">
    <property type="term" value="C:cytoplasm"/>
    <property type="evidence" value="ECO:0007669"/>
    <property type="project" value="UniProtKB-SubCell"/>
</dbReference>
<dbReference type="GO" id="GO:0003942">
    <property type="term" value="F:N-acetyl-gamma-glutamyl-phosphate reductase activity"/>
    <property type="evidence" value="ECO:0007669"/>
    <property type="project" value="UniProtKB-UniRule"/>
</dbReference>
<dbReference type="GO" id="GO:0051287">
    <property type="term" value="F:NAD binding"/>
    <property type="evidence" value="ECO:0007669"/>
    <property type="project" value="InterPro"/>
</dbReference>
<dbReference type="GO" id="GO:0070401">
    <property type="term" value="F:NADP+ binding"/>
    <property type="evidence" value="ECO:0007669"/>
    <property type="project" value="InterPro"/>
</dbReference>
<dbReference type="GO" id="GO:0006526">
    <property type="term" value="P:L-arginine biosynthetic process"/>
    <property type="evidence" value="ECO:0007669"/>
    <property type="project" value="UniProtKB-UniRule"/>
</dbReference>
<dbReference type="CDD" id="cd23934">
    <property type="entry name" value="AGPR_1_C"/>
    <property type="match status" value="1"/>
</dbReference>
<dbReference type="CDD" id="cd17895">
    <property type="entry name" value="AGPR_1_N"/>
    <property type="match status" value="1"/>
</dbReference>
<dbReference type="FunFam" id="3.30.360.10:FF:000014">
    <property type="entry name" value="N-acetyl-gamma-glutamyl-phosphate reductase"/>
    <property type="match status" value="1"/>
</dbReference>
<dbReference type="Gene3D" id="3.30.360.10">
    <property type="entry name" value="Dihydrodipicolinate Reductase, domain 2"/>
    <property type="match status" value="1"/>
</dbReference>
<dbReference type="Gene3D" id="3.40.50.720">
    <property type="entry name" value="NAD(P)-binding Rossmann-like Domain"/>
    <property type="match status" value="1"/>
</dbReference>
<dbReference type="HAMAP" id="MF_00150">
    <property type="entry name" value="ArgC_type1"/>
    <property type="match status" value="1"/>
</dbReference>
<dbReference type="InterPro" id="IPR023013">
    <property type="entry name" value="AGPR_AS"/>
</dbReference>
<dbReference type="InterPro" id="IPR000706">
    <property type="entry name" value="AGPR_type-1"/>
</dbReference>
<dbReference type="InterPro" id="IPR036291">
    <property type="entry name" value="NAD(P)-bd_dom_sf"/>
</dbReference>
<dbReference type="InterPro" id="IPR050085">
    <property type="entry name" value="NAGSA_dehydrogenase"/>
</dbReference>
<dbReference type="InterPro" id="IPR000534">
    <property type="entry name" value="Semialdehyde_DH_NAD-bd"/>
</dbReference>
<dbReference type="NCBIfam" id="TIGR01850">
    <property type="entry name" value="argC"/>
    <property type="match status" value="1"/>
</dbReference>
<dbReference type="PANTHER" id="PTHR32338:SF10">
    <property type="entry name" value="N-ACETYL-GAMMA-GLUTAMYL-PHOSPHATE REDUCTASE, CHLOROPLASTIC-RELATED"/>
    <property type="match status" value="1"/>
</dbReference>
<dbReference type="PANTHER" id="PTHR32338">
    <property type="entry name" value="N-ACETYL-GAMMA-GLUTAMYL-PHOSPHATE REDUCTASE, CHLOROPLASTIC-RELATED-RELATED"/>
    <property type="match status" value="1"/>
</dbReference>
<dbReference type="Pfam" id="PF01118">
    <property type="entry name" value="Semialdhyde_dh"/>
    <property type="match status" value="1"/>
</dbReference>
<dbReference type="Pfam" id="PF22698">
    <property type="entry name" value="Semialdhyde_dhC_1"/>
    <property type="match status" value="1"/>
</dbReference>
<dbReference type="SMART" id="SM00859">
    <property type="entry name" value="Semialdhyde_dh"/>
    <property type="match status" value="1"/>
</dbReference>
<dbReference type="SUPFAM" id="SSF55347">
    <property type="entry name" value="Glyceraldehyde-3-phosphate dehydrogenase-like, C-terminal domain"/>
    <property type="match status" value="1"/>
</dbReference>
<dbReference type="SUPFAM" id="SSF51735">
    <property type="entry name" value="NAD(P)-binding Rossmann-fold domains"/>
    <property type="match status" value="1"/>
</dbReference>
<dbReference type="PROSITE" id="PS01224">
    <property type="entry name" value="ARGC"/>
    <property type="match status" value="1"/>
</dbReference>
<protein>
    <recommendedName>
        <fullName evidence="1">N-acetyl-gamma-glutamyl-phosphate reductase</fullName>
        <shortName evidence="1">AGPR</shortName>
        <ecNumber evidence="1">1.2.1.38</ecNumber>
    </recommendedName>
    <alternativeName>
        <fullName evidence="1">N-acetyl-glutamate semialdehyde dehydrogenase</fullName>
        <shortName evidence="1">NAGSA dehydrogenase</shortName>
    </alternativeName>
</protein>
<accession>A4G075</accession>
<organism>
    <name type="scientific">Methanococcus maripaludis (strain C5 / ATCC BAA-1333)</name>
    <dbReference type="NCBI Taxonomy" id="402880"/>
    <lineage>
        <taxon>Archaea</taxon>
        <taxon>Methanobacteriati</taxon>
        <taxon>Methanobacteriota</taxon>
        <taxon>Methanomada group</taxon>
        <taxon>Methanococci</taxon>
        <taxon>Methanococcales</taxon>
        <taxon>Methanococcaceae</taxon>
        <taxon>Methanococcus</taxon>
    </lineage>
</organism>
<sequence>MKTVSIIGGTGYTGSELLRLLSNHDKVEVLNVTSRKEAGKKLTDFHPQVRNLRNYNDLEFQNIAPEDIDTDIVFCATPHGASMAIVPTLHEKGINIIDLSGDYRFEDIEMYESWYGLKHTGKIESAVYGLPELHREKIKKSKTIANPGCYPTGAILSMAPLVANDLVDERIIFDSKSGVSGAGVVASQTTHFPNVNENLGAYKITKHRHSPEIGKELEYLGNKRLKVSFTPHLLPVTRGILTTAHSYLKEDVSRVDVIEIYEEFYKDEFFVRIFEESMPSLTGVRGTNFCDIGGFEIDQHGRIVVVSAIDNLVKGASGQAIQNMNIIMGFDEKEGLSVGGMRP</sequence>